<evidence type="ECO:0000256" key="1">
    <source>
        <dbReference type="SAM" id="MobiDB-lite"/>
    </source>
</evidence>
<evidence type="ECO:0000303" key="2">
    <source>
    </source>
</evidence>
<evidence type="ECO:0000305" key="3"/>
<evidence type="ECO:0000312" key="4">
    <source>
        <dbReference type="Araport" id="AT5G45690"/>
    </source>
</evidence>
<evidence type="ECO:0000312" key="5">
    <source>
        <dbReference type="EMBL" id="AAK96510.1"/>
    </source>
</evidence>
<feature type="chain" id="PRO_0000436088" description="Oil body-associated protein 2A">
    <location>
        <begin position="1"/>
        <end position="247"/>
    </location>
</feature>
<feature type="region of interest" description="Disordered" evidence="1">
    <location>
        <begin position="1"/>
        <end position="26"/>
    </location>
</feature>
<sequence>MASSDERPGAYPARDGSENLPPGDPKTMKTVVMDKGAAMMQSLKPIKQMSLHLCSFACYGHDPSRQIEVNFYVHRLNQDFLQCAVYDCDSSKPHLIGIEYIVSERLFESLDPEEQKLWHSHDYEIQTGLLVTPRVPELVAKTELENIAKTYGKFWCTWQTDRGDKLPLGAPSLMMSPQDVNMGKIKPGLLKKRDDEYGISTESLKTSRVGIMGPEKKNSMADYWVHHGKGLAVDIIETEMQKLAPFP</sequence>
<accession>Q941A4</accession>
<accession>Q9FK74</accession>
<dbReference type="EMBL" id="AB012245">
    <property type="protein sequence ID" value="BAB09211.1"/>
    <property type="status" value="ALT_SEQ"/>
    <property type="molecule type" value="Genomic_DNA"/>
</dbReference>
<dbReference type="EMBL" id="CP002688">
    <property type="protein sequence ID" value="AED95284.1"/>
    <property type="molecule type" value="Genomic_DNA"/>
</dbReference>
<dbReference type="EMBL" id="AY052317">
    <property type="protein sequence ID" value="AAK96510.1"/>
    <property type="molecule type" value="mRNA"/>
</dbReference>
<dbReference type="EMBL" id="AY079121">
    <property type="protein sequence ID" value="AAL79603.1"/>
    <property type="molecule type" value="mRNA"/>
</dbReference>
<dbReference type="RefSeq" id="NP_199381.1">
    <property type="nucleotide sequence ID" value="NM_123936.4"/>
</dbReference>
<dbReference type="FunCoup" id="Q941A4">
    <property type="interactions" value="54"/>
</dbReference>
<dbReference type="STRING" id="3702.Q941A4"/>
<dbReference type="PaxDb" id="3702-AT5G45690.1"/>
<dbReference type="ProMEX" id="Q941A4"/>
<dbReference type="ProteomicsDB" id="239076"/>
<dbReference type="EnsemblPlants" id="AT5G45690.1">
    <property type="protein sequence ID" value="AT5G45690.1"/>
    <property type="gene ID" value="AT5G45690"/>
</dbReference>
<dbReference type="GeneID" id="834608"/>
<dbReference type="Gramene" id="AT5G45690.1">
    <property type="protein sequence ID" value="AT5G45690.1"/>
    <property type="gene ID" value="AT5G45690"/>
</dbReference>
<dbReference type="KEGG" id="ath:AT5G45690"/>
<dbReference type="Araport" id="AT5G45690"/>
<dbReference type="TAIR" id="AT5G45690"/>
<dbReference type="eggNOG" id="ENOG502QPUT">
    <property type="taxonomic scope" value="Eukaryota"/>
</dbReference>
<dbReference type="HOGENOM" id="CLU_071931_0_0_1"/>
<dbReference type="InParanoid" id="Q941A4"/>
<dbReference type="OMA" id="TSRVGIM"/>
<dbReference type="OrthoDB" id="1901244at2759"/>
<dbReference type="PhylomeDB" id="Q941A4"/>
<dbReference type="PRO" id="PR:Q941A4"/>
<dbReference type="Proteomes" id="UP000006548">
    <property type="component" value="Chromosome 5"/>
</dbReference>
<dbReference type="ExpressionAtlas" id="Q941A4">
    <property type="expression patterns" value="baseline and differential"/>
</dbReference>
<dbReference type="InterPro" id="IPR010686">
    <property type="entry name" value="OBAP-like"/>
</dbReference>
<dbReference type="PANTHER" id="PTHR31360">
    <property type="match status" value="1"/>
</dbReference>
<dbReference type="PANTHER" id="PTHR31360:SF1">
    <property type="entry name" value="OIL BODY-ASSOCIATED PROTEIN 2A"/>
    <property type="match status" value="1"/>
</dbReference>
<dbReference type="Pfam" id="PF06884">
    <property type="entry name" value="DUF1264"/>
    <property type="match status" value="1"/>
</dbReference>
<comment type="similarity">
    <text evidence="3">Belongs to the OBAP family.</text>
</comment>
<comment type="sequence caution" evidence="3">
    <conflict type="erroneous gene model prediction">
        <sequence resource="EMBL-CDS" id="BAB09211"/>
    </conflict>
</comment>
<reference key="1">
    <citation type="journal article" date="1998" name="DNA Res.">
        <title>Structural analysis of Arabidopsis thaliana chromosome 5. VI. Sequence features of the regions of 1,367,185 bp covered by 19 physically assigned P1 and TAC clones.</title>
        <authorList>
            <person name="Kotani H."/>
            <person name="Nakamura Y."/>
            <person name="Sato S."/>
            <person name="Asamizu E."/>
            <person name="Kaneko T."/>
            <person name="Miyajima N."/>
            <person name="Tabata S."/>
        </authorList>
    </citation>
    <scope>NUCLEOTIDE SEQUENCE [LARGE SCALE GENOMIC DNA]</scope>
    <source>
        <strain>cv. Columbia</strain>
    </source>
</reference>
<reference key="2">
    <citation type="journal article" date="2017" name="Plant J.">
        <title>Araport11: a complete reannotation of the Arabidopsis thaliana reference genome.</title>
        <authorList>
            <person name="Cheng C.Y."/>
            <person name="Krishnakumar V."/>
            <person name="Chan A.P."/>
            <person name="Thibaud-Nissen F."/>
            <person name="Schobel S."/>
            <person name="Town C.D."/>
        </authorList>
    </citation>
    <scope>GENOME REANNOTATION</scope>
    <source>
        <strain>cv. Columbia</strain>
    </source>
</reference>
<reference key="3">
    <citation type="journal article" date="2003" name="Science">
        <title>Empirical analysis of transcriptional activity in the Arabidopsis genome.</title>
        <authorList>
            <person name="Yamada K."/>
            <person name="Lim J."/>
            <person name="Dale J.M."/>
            <person name="Chen H."/>
            <person name="Shinn P."/>
            <person name="Palm C.J."/>
            <person name="Southwick A.M."/>
            <person name="Wu H.C."/>
            <person name="Kim C.J."/>
            <person name="Nguyen M."/>
            <person name="Pham P.K."/>
            <person name="Cheuk R.F."/>
            <person name="Karlin-Newmann G."/>
            <person name="Liu S.X."/>
            <person name="Lam B."/>
            <person name="Sakano H."/>
            <person name="Wu T."/>
            <person name="Yu G."/>
            <person name="Miranda M."/>
            <person name="Quach H.L."/>
            <person name="Tripp M."/>
            <person name="Chang C.H."/>
            <person name="Lee J.M."/>
            <person name="Toriumi M.J."/>
            <person name="Chan M.M."/>
            <person name="Tang C.C."/>
            <person name="Onodera C.S."/>
            <person name="Deng J.M."/>
            <person name="Akiyama K."/>
            <person name="Ansari Y."/>
            <person name="Arakawa T."/>
            <person name="Banh J."/>
            <person name="Banno F."/>
            <person name="Bowser L."/>
            <person name="Brooks S.Y."/>
            <person name="Carninci P."/>
            <person name="Chao Q."/>
            <person name="Choy N."/>
            <person name="Enju A."/>
            <person name="Goldsmith A.D."/>
            <person name="Gurjal M."/>
            <person name="Hansen N.F."/>
            <person name="Hayashizaki Y."/>
            <person name="Johnson-Hopson C."/>
            <person name="Hsuan V.W."/>
            <person name="Iida K."/>
            <person name="Karnes M."/>
            <person name="Khan S."/>
            <person name="Koesema E."/>
            <person name="Ishida J."/>
            <person name="Jiang P.X."/>
            <person name="Jones T."/>
            <person name="Kawai J."/>
            <person name="Kamiya A."/>
            <person name="Meyers C."/>
            <person name="Nakajima M."/>
            <person name="Narusaka M."/>
            <person name="Seki M."/>
            <person name="Sakurai T."/>
            <person name="Satou M."/>
            <person name="Tamse R."/>
            <person name="Vaysberg M."/>
            <person name="Wallender E.K."/>
            <person name="Wong C."/>
            <person name="Yamamura Y."/>
            <person name="Yuan S."/>
            <person name="Shinozaki K."/>
            <person name="Davis R.W."/>
            <person name="Theologis A."/>
            <person name="Ecker J.R."/>
        </authorList>
    </citation>
    <scope>NUCLEOTIDE SEQUENCE [LARGE SCALE MRNA]</scope>
    <source>
        <strain>cv. Columbia</strain>
    </source>
</reference>
<reference key="4">
    <citation type="journal article" date="2014" name="Plant Physiol.">
        <title>The evolutionary conserved oil body associated protein OBAP1 participates in the regulation of oil body size.</title>
        <authorList>
            <person name="Lopez-Ribera I."/>
            <person name="La Paz J.L."/>
            <person name="Repiso C."/>
            <person name="Garcia N."/>
            <person name="Miquel M."/>
            <person name="Hernandez M.L."/>
            <person name="Martinez-Rivas J.M."/>
            <person name="Vicient C.M."/>
        </authorList>
    </citation>
    <scope>GENE FAMILY</scope>
    <scope>NOMENCLATURE</scope>
</reference>
<proteinExistence type="evidence at transcript level"/>
<keyword id="KW-1185">Reference proteome</keyword>
<name>OBP2A_ARATH</name>
<gene>
    <name evidence="2" type="primary">OBAP2A</name>
    <name evidence="4" type="ordered locus">At5g45690</name>
    <name evidence="5" type="ORF">MRA19.8</name>
</gene>
<organism>
    <name type="scientific">Arabidopsis thaliana</name>
    <name type="common">Mouse-ear cress</name>
    <dbReference type="NCBI Taxonomy" id="3702"/>
    <lineage>
        <taxon>Eukaryota</taxon>
        <taxon>Viridiplantae</taxon>
        <taxon>Streptophyta</taxon>
        <taxon>Embryophyta</taxon>
        <taxon>Tracheophyta</taxon>
        <taxon>Spermatophyta</taxon>
        <taxon>Magnoliopsida</taxon>
        <taxon>eudicotyledons</taxon>
        <taxon>Gunneridae</taxon>
        <taxon>Pentapetalae</taxon>
        <taxon>rosids</taxon>
        <taxon>malvids</taxon>
        <taxon>Brassicales</taxon>
        <taxon>Brassicaceae</taxon>
        <taxon>Camelineae</taxon>
        <taxon>Arabidopsis</taxon>
    </lineage>
</organism>
<protein>
    <recommendedName>
        <fullName evidence="2">Oil body-associated protein 2A</fullName>
    </recommendedName>
</protein>